<dbReference type="EC" id="1.13.11.5" evidence="1"/>
<dbReference type="EMBL" id="CP000438">
    <property type="protein sequence ID" value="ABJ11196.1"/>
    <property type="molecule type" value="Genomic_DNA"/>
</dbReference>
<dbReference type="RefSeq" id="WP_003088587.1">
    <property type="nucleotide sequence ID" value="NZ_CP034244.1"/>
</dbReference>
<dbReference type="SMR" id="Q02LF6"/>
<dbReference type="KEGG" id="pau:PA14_38510"/>
<dbReference type="PseudoCAP" id="PA14_38510"/>
<dbReference type="HOGENOM" id="CLU_027174_0_0_6"/>
<dbReference type="BioCyc" id="PAER208963:G1G74-3239-MONOMER"/>
<dbReference type="UniPathway" id="UPA00139">
    <property type="reaction ID" value="UER00339"/>
</dbReference>
<dbReference type="Proteomes" id="UP000000653">
    <property type="component" value="Chromosome"/>
</dbReference>
<dbReference type="GO" id="GO:0005737">
    <property type="term" value="C:cytoplasm"/>
    <property type="evidence" value="ECO:0007669"/>
    <property type="project" value="TreeGrafter"/>
</dbReference>
<dbReference type="GO" id="GO:0004411">
    <property type="term" value="F:homogentisate 1,2-dioxygenase activity"/>
    <property type="evidence" value="ECO:0007669"/>
    <property type="project" value="UniProtKB-UniRule"/>
</dbReference>
<dbReference type="GO" id="GO:0005506">
    <property type="term" value="F:iron ion binding"/>
    <property type="evidence" value="ECO:0007669"/>
    <property type="project" value="UniProtKB-UniRule"/>
</dbReference>
<dbReference type="GO" id="GO:0006559">
    <property type="term" value="P:L-phenylalanine catabolic process"/>
    <property type="evidence" value="ECO:0007669"/>
    <property type="project" value="UniProtKB-UniRule"/>
</dbReference>
<dbReference type="GO" id="GO:0006572">
    <property type="term" value="P:tyrosine catabolic process"/>
    <property type="evidence" value="ECO:0007669"/>
    <property type="project" value="UniProtKB-UniRule"/>
</dbReference>
<dbReference type="CDD" id="cd07000">
    <property type="entry name" value="cupin_HGO_N"/>
    <property type="match status" value="1"/>
</dbReference>
<dbReference type="FunFam" id="2.60.120.10:FF:000036">
    <property type="entry name" value="Homogentisate 1,2-dioxygenase"/>
    <property type="match status" value="1"/>
</dbReference>
<dbReference type="Gene3D" id="2.60.120.10">
    <property type="entry name" value="Jelly Rolls"/>
    <property type="match status" value="1"/>
</dbReference>
<dbReference type="HAMAP" id="MF_00334">
    <property type="entry name" value="Homogentis_dioxygen"/>
    <property type="match status" value="1"/>
</dbReference>
<dbReference type="InterPro" id="IPR046451">
    <property type="entry name" value="HgmA_C"/>
</dbReference>
<dbReference type="InterPro" id="IPR046452">
    <property type="entry name" value="HgmA_N"/>
</dbReference>
<dbReference type="InterPro" id="IPR005708">
    <property type="entry name" value="Homogentis_dOase"/>
</dbReference>
<dbReference type="InterPro" id="IPR022950">
    <property type="entry name" value="Homogentis_dOase_bac"/>
</dbReference>
<dbReference type="InterPro" id="IPR014710">
    <property type="entry name" value="RmlC-like_jellyroll"/>
</dbReference>
<dbReference type="InterPro" id="IPR011051">
    <property type="entry name" value="RmlC_Cupin_sf"/>
</dbReference>
<dbReference type="NCBIfam" id="TIGR01015">
    <property type="entry name" value="hmgA"/>
    <property type="match status" value="1"/>
</dbReference>
<dbReference type="PANTHER" id="PTHR11056">
    <property type="entry name" value="HOMOGENTISATE 1,2-DIOXYGENASE"/>
    <property type="match status" value="1"/>
</dbReference>
<dbReference type="PANTHER" id="PTHR11056:SF0">
    <property type="entry name" value="HOMOGENTISATE 1,2-DIOXYGENASE"/>
    <property type="match status" value="1"/>
</dbReference>
<dbReference type="Pfam" id="PF04209">
    <property type="entry name" value="HgmA_C"/>
    <property type="match status" value="1"/>
</dbReference>
<dbReference type="Pfam" id="PF20510">
    <property type="entry name" value="HgmA_N"/>
    <property type="match status" value="1"/>
</dbReference>
<dbReference type="SUPFAM" id="SSF51182">
    <property type="entry name" value="RmlC-like cupins"/>
    <property type="match status" value="1"/>
</dbReference>
<evidence type="ECO:0000255" key="1">
    <source>
        <dbReference type="HAMAP-Rule" id="MF_00334"/>
    </source>
</evidence>
<reference key="1">
    <citation type="journal article" date="2006" name="Genome Biol.">
        <title>Genomic analysis reveals that Pseudomonas aeruginosa virulence is combinatorial.</title>
        <authorList>
            <person name="Lee D.G."/>
            <person name="Urbach J.M."/>
            <person name="Wu G."/>
            <person name="Liberati N.T."/>
            <person name="Feinbaum R.L."/>
            <person name="Miyata S."/>
            <person name="Diggins L.T."/>
            <person name="He J."/>
            <person name="Saucier M."/>
            <person name="Deziel E."/>
            <person name="Friedman L."/>
            <person name="Li L."/>
            <person name="Grills G."/>
            <person name="Montgomery K."/>
            <person name="Kucherlapati R."/>
            <person name="Rahme L.G."/>
            <person name="Ausubel F.M."/>
        </authorList>
    </citation>
    <scope>NUCLEOTIDE SEQUENCE [LARGE SCALE GENOMIC DNA]</scope>
    <source>
        <strain>UCBPP-PA14</strain>
    </source>
</reference>
<organism>
    <name type="scientific">Pseudomonas aeruginosa (strain UCBPP-PA14)</name>
    <dbReference type="NCBI Taxonomy" id="208963"/>
    <lineage>
        <taxon>Bacteria</taxon>
        <taxon>Pseudomonadati</taxon>
        <taxon>Pseudomonadota</taxon>
        <taxon>Gammaproteobacteria</taxon>
        <taxon>Pseudomonadales</taxon>
        <taxon>Pseudomonadaceae</taxon>
        <taxon>Pseudomonas</taxon>
    </lineage>
</organism>
<name>HGD_PSEAB</name>
<gene>
    <name evidence="1" type="primary">hmgA</name>
    <name type="ordered locus">PA14_38510</name>
</gene>
<comment type="function">
    <text evidence="1">Involved in the catabolism of homogentisate (2,5-dihydroxyphenylacetate or 2,5-OH-PhAc), a central intermediate in the degradation of phenylalanine and tyrosine. Catalyzes the oxidative ring cleavage of the aromatic ring of homogentisate to yield maleylacetoacetate.</text>
</comment>
<comment type="catalytic activity">
    <reaction evidence="1">
        <text>homogentisate + O2 = 4-maleylacetoacetate + H(+)</text>
        <dbReference type="Rhea" id="RHEA:15449"/>
        <dbReference type="ChEBI" id="CHEBI:15378"/>
        <dbReference type="ChEBI" id="CHEBI:15379"/>
        <dbReference type="ChEBI" id="CHEBI:16169"/>
        <dbReference type="ChEBI" id="CHEBI:17105"/>
        <dbReference type="EC" id="1.13.11.5"/>
    </reaction>
</comment>
<comment type="cofactor">
    <cofactor evidence="1">
        <name>Fe cation</name>
        <dbReference type="ChEBI" id="CHEBI:24875"/>
    </cofactor>
</comment>
<comment type="pathway">
    <text evidence="1">Amino-acid degradation; L-phenylalanine degradation; acetoacetate and fumarate from L-phenylalanine: step 4/6.</text>
</comment>
<comment type="subunit">
    <text evidence="1">Hexamer; dimer of trimers.</text>
</comment>
<comment type="similarity">
    <text evidence="1">Belongs to the homogentisate dioxygenase family.</text>
</comment>
<protein>
    <recommendedName>
        <fullName evidence="1">Homogentisate 1,2-dioxygenase</fullName>
        <shortName evidence="1">HGDO</shortName>
        <ecNumber evidence="1">1.13.11.5</ecNumber>
    </recommendedName>
    <alternativeName>
        <fullName evidence="1">Homogentisate oxygenase</fullName>
    </alternativeName>
    <alternativeName>
        <fullName evidence="1">Homogentisic acid oxidase</fullName>
    </alternativeName>
    <alternativeName>
        <fullName evidence="1">Homogentisicase</fullName>
    </alternativeName>
</protein>
<accession>Q02LF6</accession>
<sequence>MNLDSTALAYQSGFGNEFSSEALPGALPVGQNSPQKAPYGLYAELLSGTAFTMARSEARRTWLYRITPSAKHPPFRRLERQIAGAELDAPTPNRLRWDPLALPEQPTDFLDGLLRMAANAPGDKPAGVSIYQYLANRSMERCFYDADGELLLVPQLGRLRLCTELGALQVEPLEIAVIPRGMKFRVELLDGEARGYIAENHGAPLRLPDLGPIGSNGLANPRDFLAPVARYEDSRQPLQLVQKYLGELWACELDHSPLDVVAWHGNNVPYKYDLRRFNTIGTVSFDHPDPSIFTVLTSPTSVHGLANIDFVIFPPRWMVAENTFRPPWFHRNLMNEFMGLIQGAYDAKAGGFVPGGASLHSCMSAHGPDAESCDKAIAADLKPHRIDQTMAFMFETSQVLRPSRAALETPALQNDYDACWASLVSTFNPQRR</sequence>
<feature type="chain" id="PRO_1000019533" description="Homogentisate 1,2-dioxygenase">
    <location>
        <begin position="1"/>
        <end position="432"/>
    </location>
</feature>
<feature type="active site" description="Proton acceptor" evidence="1">
    <location>
        <position position="287"/>
    </location>
</feature>
<feature type="binding site" evidence="1">
    <location>
        <position position="330"/>
    </location>
    <ligand>
        <name>Fe cation</name>
        <dbReference type="ChEBI" id="CHEBI:24875"/>
    </ligand>
</feature>
<feature type="binding site" evidence="1">
    <location>
        <position position="336"/>
    </location>
    <ligand>
        <name>Fe cation</name>
        <dbReference type="ChEBI" id="CHEBI:24875"/>
    </ligand>
</feature>
<feature type="binding site" evidence="1">
    <location>
        <position position="345"/>
    </location>
    <ligand>
        <name>homogentisate</name>
        <dbReference type="ChEBI" id="CHEBI:16169"/>
    </ligand>
</feature>
<feature type="binding site" evidence="1">
    <location>
        <position position="366"/>
    </location>
    <ligand>
        <name>Fe cation</name>
        <dbReference type="ChEBI" id="CHEBI:24875"/>
    </ligand>
</feature>
<feature type="binding site" evidence="1">
    <location>
        <position position="366"/>
    </location>
    <ligand>
        <name>homogentisate</name>
        <dbReference type="ChEBI" id="CHEBI:16169"/>
    </ligand>
</feature>
<proteinExistence type="inferred from homology"/>
<keyword id="KW-0223">Dioxygenase</keyword>
<keyword id="KW-0408">Iron</keyword>
<keyword id="KW-0479">Metal-binding</keyword>
<keyword id="KW-0560">Oxidoreductase</keyword>
<keyword id="KW-0585">Phenylalanine catabolism</keyword>
<keyword id="KW-0828">Tyrosine catabolism</keyword>